<accession>P0AA73</accession>
<accession>P28636</accession>
<accession>Q2M928</accession>
<feature type="chain" id="PRO_0000108169" description="Uncharacterized inner membrane transporter YhbE">
    <location>
        <begin position="1"/>
        <end position="321"/>
    </location>
</feature>
<feature type="topological domain" description="Cytoplasmic" evidence="1">
    <location>
        <begin position="1"/>
        <end position="5"/>
    </location>
</feature>
<feature type="transmembrane region" description="Helical" evidence="1">
    <location>
        <begin position="6"/>
        <end position="26"/>
    </location>
</feature>
<feature type="topological domain" description="Periplasmic" evidence="1">
    <location>
        <begin position="27"/>
        <end position="35"/>
    </location>
</feature>
<feature type="transmembrane region" description="Helical" evidence="1">
    <location>
        <begin position="36"/>
        <end position="56"/>
    </location>
</feature>
<feature type="topological domain" description="Cytoplasmic" evidence="1">
    <location>
        <begin position="57"/>
        <end position="70"/>
    </location>
</feature>
<feature type="transmembrane region" description="Helical" evidence="1">
    <location>
        <begin position="71"/>
        <end position="91"/>
    </location>
</feature>
<feature type="topological domain" description="Periplasmic" evidence="1">
    <location>
        <begin position="92"/>
        <end position="99"/>
    </location>
</feature>
<feature type="transmembrane region" description="Helical" evidence="1">
    <location>
        <begin position="100"/>
        <end position="120"/>
    </location>
</feature>
<feature type="topological domain" description="Cytoplasmic" evidence="1">
    <location>
        <begin position="121"/>
        <end position="130"/>
    </location>
</feature>
<feature type="transmembrane region" description="Helical" evidence="1">
    <location>
        <begin position="131"/>
        <end position="151"/>
    </location>
</feature>
<feature type="topological domain" description="Periplasmic" evidence="1">
    <location>
        <begin position="152"/>
        <end position="156"/>
    </location>
</feature>
<feature type="transmembrane region" description="Helical" evidence="1">
    <location>
        <begin position="157"/>
        <end position="177"/>
    </location>
</feature>
<feature type="topological domain" description="Cytoplasmic" evidence="1">
    <location>
        <begin position="178"/>
        <end position="190"/>
    </location>
</feature>
<feature type="transmembrane region" description="Helical" evidence="1">
    <location>
        <begin position="191"/>
        <end position="211"/>
    </location>
</feature>
<feature type="topological domain" description="Periplasmic" evidence="1">
    <location>
        <begin position="212"/>
        <end position="216"/>
    </location>
</feature>
<feature type="transmembrane region" description="Helical" evidence="1">
    <location>
        <begin position="217"/>
        <end position="237"/>
    </location>
</feature>
<feature type="topological domain" description="Cytoplasmic" evidence="1">
    <location>
        <begin position="238"/>
        <end position="249"/>
    </location>
</feature>
<feature type="transmembrane region" description="Helical" evidence="1">
    <location>
        <begin position="250"/>
        <end position="270"/>
    </location>
</feature>
<feature type="topological domain" description="Periplasmic" evidence="1">
    <location>
        <begin position="271"/>
        <end position="278"/>
    </location>
</feature>
<feature type="transmembrane region" description="Helical" evidence="1">
    <location>
        <begin position="279"/>
        <end position="299"/>
    </location>
</feature>
<feature type="topological domain" description="Cytoplasmic" evidence="1">
    <location>
        <begin position="300"/>
        <end position="321"/>
    </location>
</feature>
<feature type="domain" description="EamA 1">
    <location>
        <begin position="17"/>
        <end position="144"/>
    </location>
</feature>
<feature type="domain" description="EamA 2">
    <location>
        <begin position="169"/>
        <end position="292"/>
    </location>
</feature>
<comment type="subcellular location">
    <subcellularLocation>
        <location>Cell inner membrane</location>
        <topology>Multi-pass membrane protein</topology>
    </subcellularLocation>
</comment>
<comment type="disruption phenotype">
    <text evidence="2">No visible effect on bacterial persistence.</text>
</comment>
<comment type="similarity">
    <text evidence="3">Belongs to the EamA transporter family.</text>
</comment>
<protein>
    <recommendedName>
        <fullName>Uncharacterized inner membrane transporter YhbE</fullName>
    </recommendedName>
</protein>
<sequence>MKQQAGIGILLALTTAICWGALPIAMKQVLEVMEPPTIVFYRFLMASIGLGAILAVKKRLPPLRVFRKPRWLILLAVATAGLFGNFILFSSSLQYLSPTASQVIGQLSPVGMMVASVFILKEKMRSTQVVGALMLLSGLVMFFNTSLVEIFTKLTDYTWGVIFGVGAATVWVSYGVAQKVLLRRLASPQILFLLYTLCTIALFPLAKPGVIAQLSHWQLACLIFCGLNTLVGYGALAEAMARWQAAQVSAIITLTPLFTLFFSDLLSLAWPDFFARPMLNLLGYLGAFVVVAGAMYSAIGHRIWGGLRKHTTVVSQPRAGE</sequence>
<organism>
    <name type="scientific">Escherichia coli (strain K12)</name>
    <dbReference type="NCBI Taxonomy" id="83333"/>
    <lineage>
        <taxon>Bacteria</taxon>
        <taxon>Pseudomonadati</taxon>
        <taxon>Pseudomonadota</taxon>
        <taxon>Gammaproteobacteria</taxon>
        <taxon>Enterobacterales</taxon>
        <taxon>Enterobacteriaceae</taxon>
        <taxon>Escherichia</taxon>
    </lineage>
</organism>
<proteinExistence type="evidence at protein level"/>
<reference key="1">
    <citation type="journal article" date="1997" name="Science">
        <title>The complete genome sequence of Escherichia coli K-12.</title>
        <authorList>
            <person name="Blattner F.R."/>
            <person name="Plunkett G. III"/>
            <person name="Bloch C.A."/>
            <person name="Perna N.T."/>
            <person name="Burland V."/>
            <person name="Riley M."/>
            <person name="Collado-Vides J."/>
            <person name="Glasner J.D."/>
            <person name="Rode C.K."/>
            <person name="Mayhew G.F."/>
            <person name="Gregor J."/>
            <person name="Davis N.W."/>
            <person name="Kirkpatrick H.A."/>
            <person name="Goeden M.A."/>
            <person name="Rose D.J."/>
            <person name="Mau B."/>
            <person name="Shao Y."/>
        </authorList>
    </citation>
    <scope>NUCLEOTIDE SEQUENCE [LARGE SCALE GENOMIC DNA]</scope>
    <source>
        <strain>K12 / MG1655 / ATCC 47076</strain>
    </source>
</reference>
<reference key="2">
    <citation type="journal article" date="2006" name="Mol. Syst. Biol.">
        <title>Highly accurate genome sequences of Escherichia coli K-12 strains MG1655 and W3110.</title>
        <authorList>
            <person name="Hayashi K."/>
            <person name="Morooka N."/>
            <person name="Yamamoto Y."/>
            <person name="Fujita K."/>
            <person name="Isono K."/>
            <person name="Choi S."/>
            <person name="Ohtsubo E."/>
            <person name="Baba T."/>
            <person name="Wanner B.L."/>
            <person name="Mori H."/>
            <person name="Horiuchi T."/>
        </authorList>
    </citation>
    <scope>NUCLEOTIDE SEQUENCE [LARGE SCALE GENOMIC DNA]</scope>
    <source>
        <strain>K12 / W3110 / ATCC 27325 / DSM 5911</strain>
    </source>
</reference>
<reference key="3">
    <citation type="journal article" date="1993" name="DNA Seq.">
        <title>Cloning and nucleotide sequencing of the genes, rpIU and rpmA, for ribosomal proteins L21 and L27 of Escherichia coli.</title>
        <authorList>
            <person name="Jeong J.H."/>
            <person name="Kitakawa M.S."/>
            <person name="Isono S."/>
            <person name="Isono K."/>
        </authorList>
    </citation>
    <scope>NUCLEOTIDE SEQUENCE [GENOMIC DNA] OF 1-265</scope>
    <source>
        <strain>K12 / W3110 / ATCC 27325 / DSM 5911</strain>
    </source>
</reference>
<reference key="4">
    <citation type="journal article" date="2005" name="Science">
        <title>Global topology analysis of the Escherichia coli inner membrane proteome.</title>
        <authorList>
            <person name="Daley D.O."/>
            <person name="Rapp M."/>
            <person name="Granseth E."/>
            <person name="Melen K."/>
            <person name="Drew D."/>
            <person name="von Heijne G."/>
        </authorList>
    </citation>
    <scope>TOPOLOGY [LARGE SCALE ANALYSIS]</scope>
    <source>
        <strain>K12 / MG1655 / ATCC 47076</strain>
    </source>
</reference>
<reference key="5">
    <citation type="journal article" date="2015" name="Mol. Cell">
        <title>Obg and membrane depolarization are part of a microbial bet-hedging strategy that leads to antibiotic tolerance.</title>
        <authorList>
            <person name="Verstraeten N."/>
            <person name="Knapen W.J."/>
            <person name="Kint C.I."/>
            <person name="Liebens V."/>
            <person name="Van den Bergh B."/>
            <person name="Dewachter L."/>
            <person name="Michiels J.E."/>
            <person name="Fu Q."/>
            <person name="David C.C."/>
            <person name="Fierro A.C."/>
            <person name="Marchal K."/>
            <person name="Beirlant J."/>
            <person name="Versees W."/>
            <person name="Hofkens J."/>
            <person name="Jansen M."/>
            <person name="Fauvart M."/>
            <person name="Michiels J."/>
        </authorList>
    </citation>
    <scope>DISRUPTION PHENOTYPE</scope>
    <source>
        <strain>TOP10</strain>
    </source>
</reference>
<dbReference type="EMBL" id="U18997">
    <property type="protein sequence ID" value="AAA57985.1"/>
    <property type="molecule type" value="Genomic_DNA"/>
</dbReference>
<dbReference type="EMBL" id="U00096">
    <property type="protein sequence ID" value="AAC76216.1"/>
    <property type="molecule type" value="Genomic_DNA"/>
</dbReference>
<dbReference type="EMBL" id="AP009048">
    <property type="protein sequence ID" value="BAE77228.1"/>
    <property type="molecule type" value="Genomic_DNA"/>
</dbReference>
<dbReference type="EMBL" id="D13267">
    <property type="protein sequence ID" value="BAA20990.1"/>
    <property type="molecule type" value="Genomic_DNA"/>
</dbReference>
<dbReference type="PIR" id="B65109">
    <property type="entry name" value="B65109"/>
</dbReference>
<dbReference type="RefSeq" id="NP_417651.1">
    <property type="nucleotide sequence ID" value="NC_000913.3"/>
</dbReference>
<dbReference type="RefSeq" id="WP_000813037.1">
    <property type="nucleotide sequence ID" value="NZ_STEB01000012.1"/>
</dbReference>
<dbReference type="SMR" id="P0AA73"/>
<dbReference type="BioGRID" id="4259342">
    <property type="interactions" value="10"/>
</dbReference>
<dbReference type="FunCoup" id="P0AA73">
    <property type="interactions" value="71"/>
</dbReference>
<dbReference type="STRING" id="511145.b3184"/>
<dbReference type="PaxDb" id="511145-b3184"/>
<dbReference type="EnsemblBacteria" id="AAC76216">
    <property type="protein sequence ID" value="AAC76216"/>
    <property type="gene ID" value="b3184"/>
</dbReference>
<dbReference type="GeneID" id="947699"/>
<dbReference type="KEGG" id="ecj:JW3151"/>
<dbReference type="KEGG" id="eco:b3184"/>
<dbReference type="KEGG" id="ecoc:C3026_17335"/>
<dbReference type="PATRIC" id="fig|1411691.4.peg.3547"/>
<dbReference type="EchoBASE" id="EB1462"/>
<dbReference type="eggNOG" id="COG0697">
    <property type="taxonomic scope" value="Bacteria"/>
</dbReference>
<dbReference type="HOGENOM" id="CLU_074108_1_0_6"/>
<dbReference type="InParanoid" id="P0AA73"/>
<dbReference type="OMA" id="HRLWGRW"/>
<dbReference type="OrthoDB" id="8479066at2"/>
<dbReference type="PhylomeDB" id="P0AA73"/>
<dbReference type="BioCyc" id="EcoCyc:EG11499-MONOMER"/>
<dbReference type="PRO" id="PR:P0AA73"/>
<dbReference type="Proteomes" id="UP000000625">
    <property type="component" value="Chromosome"/>
</dbReference>
<dbReference type="GO" id="GO:0016020">
    <property type="term" value="C:membrane"/>
    <property type="evidence" value="ECO:0000318"/>
    <property type="project" value="GO_Central"/>
</dbReference>
<dbReference type="GO" id="GO:0005886">
    <property type="term" value="C:plasma membrane"/>
    <property type="evidence" value="ECO:0000314"/>
    <property type="project" value="EcoCyc"/>
</dbReference>
<dbReference type="Gene3D" id="1.10.3730.20">
    <property type="match status" value="1"/>
</dbReference>
<dbReference type="InterPro" id="IPR000620">
    <property type="entry name" value="EamA_dom"/>
</dbReference>
<dbReference type="PANTHER" id="PTHR22911">
    <property type="entry name" value="ACYL-MALONYL CONDENSING ENZYME-RELATED"/>
    <property type="match status" value="1"/>
</dbReference>
<dbReference type="PANTHER" id="PTHR22911:SF134">
    <property type="entry name" value="DMT FAMILY TRANSPORTER"/>
    <property type="match status" value="1"/>
</dbReference>
<dbReference type="Pfam" id="PF00892">
    <property type="entry name" value="EamA"/>
    <property type="match status" value="2"/>
</dbReference>
<dbReference type="SUPFAM" id="SSF103481">
    <property type="entry name" value="Multidrug resistance efflux transporter EmrE"/>
    <property type="match status" value="1"/>
</dbReference>
<gene>
    <name type="primary">yhbE</name>
    <name type="ordered locus">b3184</name>
    <name type="ordered locus">JW3151</name>
</gene>
<evidence type="ECO:0000255" key="1"/>
<evidence type="ECO:0000269" key="2">
    <source>
    </source>
</evidence>
<evidence type="ECO:0000305" key="3"/>
<name>YHBE_ECOLI</name>
<keyword id="KW-0997">Cell inner membrane</keyword>
<keyword id="KW-1003">Cell membrane</keyword>
<keyword id="KW-0472">Membrane</keyword>
<keyword id="KW-1185">Reference proteome</keyword>
<keyword id="KW-0677">Repeat</keyword>
<keyword id="KW-0812">Transmembrane</keyword>
<keyword id="KW-1133">Transmembrane helix</keyword>
<keyword id="KW-0813">Transport</keyword>